<protein>
    <recommendedName>
        <fullName evidence="1">Holliday junction branch migration complex subunit RuvA</fullName>
    </recommendedName>
</protein>
<organism>
    <name type="scientific">Limosilactobacillus fermentum (strain NBRC 3956 / LMG 18251)</name>
    <name type="common">Lactobacillus fermentum</name>
    <dbReference type="NCBI Taxonomy" id="334390"/>
    <lineage>
        <taxon>Bacteria</taxon>
        <taxon>Bacillati</taxon>
        <taxon>Bacillota</taxon>
        <taxon>Bacilli</taxon>
        <taxon>Lactobacillales</taxon>
        <taxon>Lactobacillaceae</taxon>
        <taxon>Limosilactobacillus</taxon>
    </lineage>
</organism>
<reference key="1">
    <citation type="journal article" date="2008" name="DNA Res.">
        <title>Comparative genome analysis of Lactobacillus reuteri and Lactobacillus fermentum reveal a genomic island for reuterin and cobalamin production.</title>
        <authorList>
            <person name="Morita H."/>
            <person name="Toh H."/>
            <person name="Fukuda S."/>
            <person name="Horikawa H."/>
            <person name="Oshima K."/>
            <person name="Suzuki T."/>
            <person name="Murakami M."/>
            <person name="Hisamatsu S."/>
            <person name="Kato Y."/>
            <person name="Takizawa T."/>
            <person name="Fukuoka H."/>
            <person name="Yoshimura T."/>
            <person name="Itoh K."/>
            <person name="O'Sullivan D.J."/>
            <person name="McKay L.L."/>
            <person name="Ohno H."/>
            <person name="Kikuchi J."/>
            <person name="Masaoka T."/>
            <person name="Hattori M."/>
        </authorList>
    </citation>
    <scope>NUCLEOTIDE SEQUENCE [LARGE SCALE GENOMIC DNA]</scope>
    <source>
        <strain>NBRC 3956 / LMG 18251</strain>
    </source>
</reference>
<evidence type="ECO:0000255" key="1">
    <source>
        <dbReference type="HAMAP-Rule" id="MF_00031"/>
    </source>
</evidence>
<name>RUVA_LIMF3</name>
<comment type="function">
    <text evidence="1">The RuvA-RuvB-RuvC complex processes Holliday junction (HJ) DNA during genetic recombination and DNA repair, while the RuvA-RuvB complex plays an important role in the rescue of blocked DNA replication forks via replication fork reversal (RFR). RuvA specifically binds to HJ cruciform DNA, conferring on it an open structure. The RuvB hexamer acts as an ATP-dependent pump, pulling dsDNA into and through the RuvAB complex. HJ branch migration allows RuvC to scan DNA until it finds its consensus sequence, where it cleaves and resolves the cruciform DNA.</text>
</comment>
<comment type="subunit">
    <text evidence="1">Homotetramer. Forms an RuvA(8)-RuvB(12)-Holliday junction (HJ) complex. HJ DNA is sandwiched between 2 RuvA tetramers; dsDNA enters through RuvA and exits via RuvB. An RuvB hexamer assembles on each DNA strand where it exits the tetramer. Each RuvB hexamer is contacted by two RuvA subunits (via domain III) on 2 adjacent RuvB subunits; this complex drives branch migration. In the full resolvosome a probable DNA-RuvA(4)-RuvB(12)-RuvC(2) complex forms which resolves the HJ.</text>
</comment>
<comment type="subcellular location">
    <subcellularLocation>
        <location evidence="1">Cytoplasm</location>
    </subcellularLocation>
</comment>
<comment type="domain">
    <text evidence="1">Has three domains with a flexible linker between the domains II and III and assumes an 'L' shape. Domain III is highly mobile and contacts RuvB.</text>
</comment>
<comment type="similarity">
    <text evidence="1">Belongs to the RuvA family.</text>
</comment>
<keyword id="KW-0963">Cytoplasm</keyword>
<keyword id="KW-0227">DNA damage</keyword>
<keyword id="KW-0233">DNA recombination</keyword>
<keyword id="KW-0234">DNA repair</keyword>
<keyword id="KW-0238">DNA-binding</keyword>
<keyword id="KW-1185">Reference proteome</keyword>
<feature type="chain" id="PRO_1000090329" description="Holliday junction branch migration complex subunit RuvA">
    <location>
        <begin position="1"/>
        <end position="200"/>
    </location>
</feature>
<feature type="region of interest" description="Domain I" evidence="1">
    <location>
        <begin position="1"/>
        <end position="63"/>
    </location>
</feature>
<feature type="region of interest" description="Domain II" evidence="1">
    <location>
        <begin position="64"/>
        <end position="142"/>
    </location>
</feature>
<feature type="region of interest" description="Flexible linker" evidence="1">
    <location>
        <begin position="143"/>
        <end position="151"/>
    </location>
</feature>
<feature type="region of interest" description="Domain III" evidence="1">
    <location>
        <begin position="151"/>
        <end position="200"/>
    </location>
</feature>
<sequence length="200" mass="21667">MFEYLTGLITMVSPDFIVVDVNGVGYRVAVANPYAYQEDDQQAVQVFIYQAVKEDAITLFGFATQAEKRLFTQLIGVSGIGPKSALAILATPDHQGLIDAIQNGDDKYLSKFPGIGKKTASRIIIELKDKVVAVQDEVQLDFTAPGPLGPSAALQDALAALESLGYTTKQVERVQKQLEGLQGELSTNDYLSQGLKLLSR</sequence>
<accession>B2GB19</accession>
<proteinExistence type="inferred from homology"/>
<dbReference type="EMBL" id="AP008937">
    <property type="protein sequence ID" value="BAG26851.1"/>
    <property type="molecule type" value="Genomic_DNA"/>
</dbReference>
<dbReference type="RefSeq" id="WP_003682815.1">
    <property type="nucleotide sequence ID" value="NC_010610.1"/>
</dbReference>
<dbReference type="SMR" id="B2GB19"/>
<dbReference type="KEGG" id="lfe:LAF_0515"/>
<dbReference type="eggNOG" id="COG0632">
    <property type="taxonomic scope" value="Bacteria"/>
</dbReference>
<dbReference type="HOGENOM" id="CLU_087936_1_0_9"/>
<dbReference type="Proteomes" id="UP000001697">
    <property type="component" value="Chromosome"/>
</dbReference>
<dbReference type="GO" id="GO:0005737">
    <property type="term" value="C:cytoplasm"/>
    <property type="evidence" value="ECO:0007669"/>
    <property type="project" value="UniProtKB-SubCell"/>
</dbReference>
<dbReference type="GO" id="GO:0009379">
    <property type="term" value="C:Holliday junction helicase complex"/>
    <property type="evidence" value="ECO:0007669"/>
    <property type="project" value="InterPro"/>
</dbReference>
<dbReference type="GO" id="GO:0048476">
    <property type="term" value="C:Holliday junction resolvase complex"/>
    <property type="evidence" value="ECO:0007669"/>
    <property type="project" value="UniProtKB-UniRule"/>
</dbReference>
<dbReference type="GO" id="GO:0005524">
    <property type="term" value="F:ATP binding"/>
    <property type="evidence" value="ECO:0007669"/>
    <property type="project" value="InterPro"/>
</dbReference>
<dbReference type="GO" id="GO:0000400">
    <property type="term" value="F:four-way junction DNA binding"/>
    <property type="evidence" value="ECO:0007669"/>
    <property type="project" value="UniProtKB-UniRule"/>
</dbReference>
<dbReference type="GO" id="GO:0009378">
    <property type="term" value="F:four-way junction helicase activity"/>
    <property type="evidence" value="ECO:0007669"/>
    <property type="project" value="InterPro"/>
</dbReference>
<dbReference type="GO" id="GO:0006310">
    <property type="term" value="P:DNA recombination"/>
    <property type="evidence" value="ECO:0007669"/>
    <property type="project" value="UniProtKB-UniRule"/>
</dbReference>
<dbReference type="GO" id="GO:0006281">
    <property type="term" value="P:DNA repair"/>
    <property type="evidence" value="ECO:0007669"/>
    <property type="project" value="UniProtKB-UniRule"/>
</dbReference>
<dbReference type="Gene3D" id="1.10.150.20">
    <property type="entry name" value="5' to 3' exonuclease, C-terminal subdomain"/>
    <property type="match status" value="1"/>
</dbReference>
<dbReference type="Gene3D" id="2.40.50.140">
    <property type="entry name" value="Nucleic acid-binding proteins"/>
    <property type="match status" value="1"/>
</dbReference>
<dbReference type="HAMAP" id="MF_00031">
    <property type="entry name" value="DNA_HJ_migration_RuvA"/>
    <property type="match status" value="1"/>
</dbReference>
<dbReference type="InterPro" id="IPR013849">
    <property type="entry name" value="DNA_helicase_Holl-junc_RuvA_I"/>
</dbReference>
<dbReference type="InterPro" id="IPR003583">
    <property type="entry name" value="Hlx-hairpin-Hlx_DNA-bd_motif"/>
</dbReference>
<dbReference type="InterPro" id="IPR012340">
    <property type="entry name" value="NA-bd_OB-fold"/>
</dbReference>
<dbReference type="InterPro" id="IPR000085">
    <property type="entry name" value="RuvA"/>
</dbReference>
<dbReference type="InterPro" id="IPR010994">
    <property type="entry name" value="RuvA_2-like"/>
</dbReference>
<dbReference type="InterPro" id="IPR011114">
    <property type="entry name" value="RuvA_C"/>
</dbReference>
<dbReference type="InterPro" id="IPR036267">
    <property type="entry name" value="RuvA_C_sf"/>
</dbReference>
<dbReference type="NCBIfam" id="TIGR00084">
    <property type="entry name" value="ruvA"/>
    <property type="match status" value="1"/>
</dbReference>
<dbReference type="Pfam" id="PF14520">
    <property type="entry name" value="HHH_5"/>
    <property type="match status" value="1"/>
</dbReference>
<dbReference type="Pfam" id="PF07499">
    <property type="entry name" value="RuvA_C"/>
    <property type="match status" value="1"/>
</dbReference>
<dbReference type="Pfam" id="PF01330">
    <property type="entry name" value="RuvA_N"/>
    <property type="match status" value="1"/>
</dbReference>
<dbReference type="SMART" id="SM00278">
    <property type="entry name" value="HhH1"/>
    <property type="match status" value="2"/>
</dbReference>
<dbReference type="SUPFAM" id="SSF46929">
    <property type="entry name" value="DNA helicase RuvA subunit, C-terminal domain"/>
    <property type="match status" value="1"/>
</dbReference>
<dbReference type="SUPFAM" id="SSF50249">
    <property type="entry name" value="Nucleic acid-binding proteins"/>
    <property type="match status" value="1"/>
</dbReference>
<dbReference type="SUPFAM" id="SSF47781">
    <property type="entry name" value="RuvA domain 2-like"/>
    <property type="match status" value="1"/>
</dbReference>
<gene>
    <name evidence="1" type="primary">ruvA</name>
    <name type="ordered locus">LAF_0515</name>
</gene>